<sequence>MAKSDVIEMEGVIVDTLPNTMFRVELSNGHVVTAHISGKMRKNYIRILTGDKVKVELTPYDLSKGRIVYRAR</sequence>
<evidence type="ECO:0000255" key="1">
    <source>
        <dbReference type="HAMAP-Rule" id="MF_00075"/>
    </source>
</evidence>
<keyword id="KW-0963">Cytoplasm</keyword>
<keyword id="KW-0396">Initiation factor</keyword>
<keyword id="KW-0648">Protein biosynthesis</keyword>
<keyword id="KW-0694">RNA-binding</keyword>
<keyword id="KW-0699">rRNA-binding</keyword>
<reference key="1">
    <citation type="journal article" date="2011" name="Appl. Environ. Microbiol.">
        <title>Genomic potential of Marinobacter aquaeolei, a biogeochemical 'opportunitroph'.</title>
        <authorList>
            <person name="Singer E."/>
            <person name="Webb E.A."/>
            <person name="Nelson W.C."/>
            <person name="Heidelberg J.F."/>
            <person name="Ivanova N."/>
            <person name="Pati A."/>
            <person name="Edwards K.J."/>
        </authorList>
    </citation>
    <scope>NUCLEOTIDE SEQUENCE [LARGE SCALE GENOMIC DNA]</scope>
    <source>
        <strain>ATCC 700491 / DSM 11845 / VT8</strain>
    </source>
</reference>
<organism>
    <name type="scientific">Marinobacter nauticus (strain ATCC 700491 / DSM 11845 / VT8)</name>
    <name type="common">Marinobacter aquaeolei</name>
    <dbReference type="NCBI Taxonomy" id="351348"/>
    <lineage>
        <taxon>Bacteria</taxon>
        <taxon>Pseudomonadati</taxon>
        <taxon>Pseudomonadota</taxon>
        <taxon>Gammaproteobacteria</taxon>
        <taxon>Pseudomonadales</taxon>
        <taxon>Marinobacteraceae</taxon>
        <taxon>Marinobacter</taxon>
    </lineage>
</organism>
<dbReference type="EMBL" id="CP000514">
    <property type="protein sequence ID" value="ABM18839.1"/>
    <property type="molecule type" value="Genomic_DNA"/>
</dbReference>
<dbReference type="RefSeq" id="WP_008938619.1">
    <property type="nucleotide sequence ID" value="NC_008740.1"/>
</dbReference>
<dbReference type="SMR" id="A1U1H0"/>
<dbReference type="STRING" id="351348.Maqu_1756"/>
<dbReference type="KEGG" id="maq:Maqu_1756"/>
<dbReference type="eggNOG" id="COG0361">
    <property type="taxonomic scope" value="Bacteria"/>
</dbReference>
<dbReference type="HOGENOM" id="CLU_151267_1_0_6"/>
<dbReference type="OrthoDB" id="9803250at2"/>
<dbReference type="Proteomes" id="UP000000998">
    <property type="component" value="Chromosome"/>
</dbReference>
<dbReference type="GO" id="GO:0005829">
    <property type="term" value="C:cytosol"/>
    <property type="evidence" value="ECO:0007669"/>
    <property type="project" value="TreeGrafter"/>
</dbReference>
<dbReference type="GO" id="GO:0043022">
    <property type="term" value="F:ribosome binding"/>
    <property type="evidence" value="ECO:0007669"/>
    <property type="project" value="UniProtKB-UniRule"/>
</dbReference>
<dbReference type="GO" id="GO:0019843">
    <property type="term" value="F:rRNA binding"/>
    <property type="evidence" value="ECO:0007669"/>
    <property type="project" value="UniProtKB-UniRule"/>
</dbReference>
<dbReference type="GO" id="GO:0003743">
    <property type="term" value="F:translation initiation factor activity"/>
    <property type="evidence" value="ECO:0007669"/>
    <property type="project" value="UniProtKB-UniRule"/>
</dbReference>
<dbReference type="CDD" id="cd04451">
    <property type="entry name" value="S1_IF1"/>
    <property type="match status" value="1"/>
</dbReference>
<dbReference type="FunFam" id="2.40.50.140:FF:000002">
    <property type="entry name" value="Translation initiation factor IF-1"/>
    <property type="match status" value="1"/>
</dbReference>
<dbReference type="Gene3D" id="2.40.50.140">
    <property type="entry name" value="Nucleic acid-binding proteins"/>
    <property type="match status" value="1"/>
</dbReference>
<dbReference type="HAMAP" id="MF_00075">
    <property type="entry name" value="IF_1"/>
    <property type="match status" value="1"/>
</dbReference>
<dbReference type="InterPro" id="IPR012340">
    <property type="entry name" value="NA-bd_OB-fold"/>
</dbReference>
<dbReference type="InterPro" id="IPR006196">
    <property type="entry name" value="RNA-binding_domain_S1_IF1"/>
</dbReference>
<dbReference type="InterPro" id="IPR003029">
    <property type="entry name" value="S1_domain"/>
</dbReference>
<dbReference type="InterPro" id="IPR004368">
    <property type="entry name" value="TIF_IF1"/>
</dbReference>
<dbReference type="NCBIfam" id="TIGR00008">
    <property type="entry name" value="infA"/>
    <property type="match status" value="1"/>
</dbReference>
<dbReference type="PANTHER" id="PTHR33370">
    <property type="entry name" value="TRANSLATION INITIATION FACTOR IF-1, CHLOROPLASTIC"/>
    <property type="match status" value="1"/>
</dbReference>
<dbReference type="PANTHER" id="PTHR33370:SF1">
    <property type="entry name" value="TRANSLATION INITIATION FACTOR IF-1, CHLOROPLASTIC"/>
    <property type="match status" value="1"/>
</dbReference>
<dbReference type="Pfam" id="PF01176">
    <property type="entry name" value="eIF-1a"/>
    <property type="match status" value="1"/>
</dbReference>
<dbReference type="SMART" id="SM00316">
    <property type="entry name" value="S1"/>
    <property type="match status" value="1"/>
</dbReference>
<dbReference type="SUPFAM" id="SSF50249">
    <property type="entry name" value="Nucleic acid-binding proteins"/>
    <property type="match status" value="1"/>
</dbReference>
<dbReference type="PROSITE" id="PS50832">
    <property type="entry name" value="S1_IF1_TYPE"/>
    <property type="match status" value="1"/>
</dbReference>
<protein>
    <recommendedName>
        <fullName evidence="1">Translation initiation factor IF-1</fullName>
    </recommendedName>
</protein>
<feature type="chain" id="PRO_0000338857" description="Translation initiation factor IF-1">
    <location>
        <begin position="1"/>
        <end position="72"/>
    </location>
</feature>
<feature type="domain" description="S1-like" evidence="1">
    <location>
        <begin position="1"/>
        <end position="72"/>
    </location>
</feature>
<name>IF1_MARN8</name>
<accession>A1U1H0</accession>
<gene>
    <name evidence="1" type="primary">infA</name>
    <name type="ordered locus">Maqu_1756</name>
</gene>
<proteinExistence type="inferred from homology"/>
<comment type="function">
    <text evidence="1">One of the essential components for the initiation of protein synthesis. Stabilizes the binding of IF-2 and IF-3 on the 30S subunit to which N-formylmethionyl-tRNA(fMet) subsequently binds. Helps modulate mRNA selection, yielding the 30S pre-initiation complex (PIC). Upon addition of the 50S ribosomal subunit IF-1, IF-2 and IF-3 are released leaving the mature 70S translation initiation complex.</text>
</comment>
<comment type="subunit">
    <text evidence="1">Component of the 30S ribosomal translation pre-initiation complex which assembles on the 30S ribosome in the order IF-2 and IF-3, IF-1 and N-formylmethionyl-tRNA(fMet); mRNA recruitment can occur at any time during PIC assembly.</text>
</comment>
<comment type="subcellular location">
    <subcellularLocation>
        <location evidence="1">Cytoplasm</location>
    </subcellularLocation>
</comment>
<comment type="similarity">
    <text evidence="1">Belongs to the IF-1 family.</text>
</comment>